<gene>
    <name evidence="1" type="primary">trpD</name>
    <name type="ordered locus">amb2862</name>
</gene>
<dbReference type="EC" id="2.4.2.18" evidence="1"/>
<dbReference type="EMBL" id="AP007255">
    <property type="protein sequence ID" value="BAE51666.1"/>
    <property type="molecule type" value="Genomic_DNA"/>
</dbReference>
<dbReference type="RefSeq" id="WP_011385239.1">
    <property type="nucleotide sequence ID" value="NC_007626.1"/>
</dbReference>
<dbReference type="SMR" id="Q2W3A9"/>
<dbReference type="STRING" id="342108.amb2862"/>
<dbReference type="KEGG" id="mag:amb2862"/>
<dbReference type="HOGENOM" id="CLU_034315_2_1_5"/>
<dbReference type="OrthoDB" id="9806430at2"/>
<dbReference type="UniPathway" id="UPA00035">
    <property type="reaction ID" value="UER00041"/>
</dbReference>
<dbReference type="Proteomes" id="UP000007058">
    <property type="component" value="Chromosome"/>
</dbReference>
<dbReference type="GO" id="GO:0005829">
    <property type="term" value="C:cytosol"/>
    <property type="evidence" value="ECO:0007669"/>
    <property type="project" value="TreeGrafter"/>
</dbReference>
<dbReference type="GO" id="GO:0004048">
    <property type="term" value="F:anthranilate phosphoribosyltransferase activity"/>
    <property type="evidence" value="ECO:0007669"/>
    <property type="project" value="UniProtKB-UniRule"/>
</dbReference>
<dbReference type="GO" id="GO:0000287">
    <property type="term" value="F:magnesium ion binding"/>
    <property type="evidence" value="ECO:0007669"/>
    <property type="project" value="UniProtKB-UniRule"/>
</dbReference>
<dbReference type="GO" id="GO:0000162">
    <property type="term" value="P:L-tryptophan biosynthetic process"/>
    <property type="evidence" value="ECO:0007669"/>
    <property type="project" value="UniProtKB-UniRule"/>
</dbReference>
<dbReference type="FunFam" id="3.40.1030.10:FF:000002">
    <property type="entry name" value="Anthranilate phosphoribosyltransferase"/>
    <property type="match status" value="1"/>
</dbReference>
<dbReference type="Gene3D" id="3.40.1030.10">
    <property type="entry name" value="Nucleoside phosphorylase/phosphoribosyltransferase catalytic domain"/>
    <property type="match status" value="1"/>
</dbReference>
<dbReference type="Gene3D" id="1.20.970.10">
    <property type="entry name" value="Transferase, Pyrimidine Nucleoside Phosphorylase, Chain C"/>
    <property type="match status" value="1"/>
</dbReference>
<dbReference type="HAMAP" id="MF_00211">
    <property type="entry name" value="TrpD"/>
    <property type="match status" value="1"/>
</dbReference>
<dbReference type="InterPro" id="IPR005940">
    <property type="entry name" value="Anthranilate_Pribosyl_Tfrase"/>
</dbReference>
<dbReference type="InterPro" id="IPR000312">
    <property type="entry name" value="Glycosyl_Trfase_fam3"/>
</dbReference>
<dbReference type="InterPro" id="IPR017459">
    <property type="entry name" value="Glycosyl_Trfase_fam3_N_dom"/>
</dbReference>
<dbReference type="InterPro" id="IPR036320">
    <property type="entry name" value="Glycosyl_Trfase_fam3_N_dom_sf"/>
</dbReference>
<dbReference type="InterPro" id="IPR035902">
    <property type="entry name" value="Nuc_phospho_transferase"/>
</dbReference>
<dbReference type="NCBIfam" id="TIGR01245">
    <property type="entry name" value="trpD"/>
    <property type="match status" value="1"/>
</dbReference>
<dbReference type="PANTHER" id="PTHR43285">
    <property type="entry name" value="ANTHRANILATE PHOSPHORIBOSYLTRANSFERASE"/>
    <property type="match status" value="1"/>
</dbReference>
<dbReference type="PANTHER" id="PTHR43285:SF2">
    <property type="entry name" value="ANTHRANILATE PHOSPHORIBOSYLTRANSFERASE"/>
    <property type="match status" value="1"/>
</dbReference>
<dbReference type="Pfam" id="PF02885">
    <property type="entry name" value="Glycos_trans_3N"/>
    <property type="match status" value="1"/>
</dbReference>
<dbReference type="Pfam" id="PF00591">
    <property type="entry name" value="Glycos_transf_3"/>
    <property type="match status" value="1"/>
</dbReference>
<dbReference type="SUPFAM" id="SSF52418">
    <property type="entry name" value="Nucleoside phosphorylase/phosphoribosyltransferase catalytic domain"/>
    <property type="match status" value="1"/>
</dbReference>
<dbReference type="SUPFAM" id="SSF47648">
    <property type="entry name" value="Nucleoside phosphorylase/phosphoribosyltransferase N-terminal domain"/>
    <property type="match status" value="1"/>
</dbReference>
<reference key="1">
    <citation type="journal article" date="2005" name="DNA Res.">
        <title>Complete genome sequence of the facultative anaerobic magnetotactic bacterium Magnetospirillum sp. strain AMB-1.</title>
        <authorList>
            <person name="Matsunaga T."/>
            <person name="Okamura Y."/>
            <person name="Fukuda Y."/>
            <person name="Wahyudi A.T."/>
            <person name="Murase Y."/>
            <person name="Takeyama H."/>
        </authorList>
    </citation>
    <scope>NUCLEOTIDE SEQUENCE [LARGE SCALE GENOMIC DNA]</scope>
    <source>
        <strain>ATCC 700264 / AMB-1</strain>
    </source>
</reference>
<organism>
    <name type="scientific">Paramagnetospirillum magneticum (strain ATCC 700264 / AMB-1)</name>
    <name type="common">Magnetospirillum magneticum</name>
    <dbReference type="NCBI Taxonomy" id="342108"/>
    <lineage>
        <taxon>Bacteria</taxon>
        <taxon>Pseudomonadati</taxon>
        <taxon>Pseudomonadota</taxon>
        <taxon>Alphaproteobacteria</taxon>
        <taxon>Rhodospirillales</taxon>
        <taxon>Magnetospirillaceae</taxon>
        <taxon>Paramagnetospirillum</taxon>
    </lineage>
</organism>
<protein>
    <recommendedName>
        <fullName evidence="1">Anthranilate phosphoribosyltransferase</fullName>
        <ecNumber evidence="1">2.4.2.18</ecNumber>
    </recommendedName>
</protein>
<feature type="chain" id="PRO_0000325433" description="Anthranilate phosphoribosyltransferase">
    <location>
        <begin position="1"/>
        <end position="346"/>
    </location>
</feature>
<feature type="binding site" evidence="1">
    <location>
        <position position="88"/>
    </location>
    <ligand>
        <name>5-phospho-alpha-D-ribose 1-diphosphate</name>
        <dbReference type="ChEBI" id="CHEBI:58017"/>
    </ligand>
</feature>
<feature type="binding site" evidence="1">
    <location>
        <position position="88"/>
    </location>
    <ligand>
        <name>anthranilate</name>
        <dbReference type="ChEBI" id="CHEBI:16567"/>
        <label>1</label>
    </ligand>
</feature>
<feature type="binding site" evidence="1">
    <location>
        <begin position="91"/>
        <end position="92"/>
    </location>
    <ligand>
        <name>5-phospho-alpha-D-ribose 1-diphosphate</name>
        <dbReference type="ChEBI" id="CHEBI:58017"/>
    </ligand>
</feature>
<feature type="binding site" evidence="1">
    <location>
        <position position="96"/>
    </location>
    <ligand>
        <name>5-phospho-alpha-D-ribose 1-diphosphate</name>
        <dbReference type="ChEBI" id="CHEBI:58017"/>
    </ligand>
</feature>
<feature type="binding site" evidence="1">
    <location>
        <begin position="98"/>
        <end position="101"/>
    </location>
    <ligand>
        <name>5-phospho-alpha-D-ribose 1-diphosphate</name>
        <dbReference type="ChEBI" id="CHEBI:58017"/>
    </ligand>
</feature>
<feature type="binding site" evidence="1">
    <location>
        <position position="100"/>
    </location>
    <ligand>
        <name>Mg(2+)</name>
        <dbReference type="ChEBI" id="CHEBI:18420"/>
        <label>1</label>
    </ligand>
</feature>
<feature type="binding site" evidence="1">
    <location>
        <begin position="116"/>
        <end position="124"/>
    </location>
    <ligand>
        <name>5-phospho-alpha-D-ribose 1-diphosphate</name>
        <dbReference type="ChEBI" id="CHEBI:58017"/>
    </ligand>
</feature>
<feature type="binding site" evidence="1">
    <location>
        <position position="119"/>
    </location>
    <ligand>
        <name>anthranilate</name>
        <dbReference type="ChEBI" id="CHEBI:16567"/>
        <label>1</label>
    </ligand>
</feature>
<feature type="binding site" evidence="1">
    <location>
        <position position="128"/>
    </location>
    <ligand>
        <name>5-phospho-alpha-D-ribose 1-diphosphate</name>
        <dbReference type="ChEBI" id="CHEBI:58017"/>
    </ligand>
</feature>
<feature type="binding site" evidence="1">
    <location>
        <position position="174"/>
    </location>
    <ligand>
        <name>anthranilate</name>
        <dbReference type="ChEBI" id="CHEBI:16567"/>
        <label>2</label>
    </ligand>
</feature>
<feature type="binding site" evidence="1">
    <location>
        <position position="233"/>
    </location>
    <ligand>
        <name>Mg(2+)</name>
        <dbReference type="ChEBI" id="CHEBI:18420"/>
        <label>2</label>
    </ligand>
</feature>
<feature type="binding site" evidence="1">
    <location>
        <position position="234"/>
    </location>
    <ligand>
        <name>Mg(2+)</name>
        <dbReference type="ChEBI" id="CHEBI:18420"/>
        <label>1</label>
    </ligand>
</feature>
<feature type="binding site" evidence="1">
    <location>
        <position position="234"/>
    </location>
    <ligand>
        <name>Mg(2+)</name>
        <dbReference type="ChEBI" id="CHEBI:18420"/>
        <label>2</label>
    </ligand>
</feature>
<evidence type="ECO:0000255" key="1">
    <source>
        <dbReference type="HAMAP-Rule" id="MF_00211"/>
    </source>
</evidence>
<proteinExistence type="inferred from homology"/>
<name>TRPD_PARM1</name>
<sequence>MSTAPVTLALMKEILGRVAVGASLSETQAEEVFEIIMSGDATPAQIGGLLLGLRVRGETVEEITGAARIMRAKALKIEAPPGSVDIVGTGGDEAGTFNISTAASFVVAACGVPVAKHGNRAVSSKSGASDVLTALGVNIDADFALVHETLWENKVGFLMAPRHHNAMRHVAGPRGELGTRTIFNLLGPLSNPAGTTRQVVGVFAERWVEPLARVLGRLGAEHAWVVHGTDGLDELTTTGPTRVAEYKGGEVRLFSVTPEEVGLKRAAPADLKGGDSATNAAAMKALLKGEQGAYRDIVVLNAAAALVVAGKVDTLGDGARAAEQAIDRGEAEAVLHRMIAITNRTS</sequence>
<keyword id="KW-0028">Amino-acid biosynthesis</keyword>
<keyword id="KW-0057">Aromatic amino acid biosynthesis</keyword>
<keyword id="KW-0328">Glycosyltransferase</keyword>
<keyword id="KW-0460">Magnesium</keyword>
<keyword id="KW-0479">Metal-binding</keyword>
<keyword id="KW-0808">Transferase</keyword>
<keyword id="KW-0822">Tryptophan biosynthesis</keyword>
<accession>Q2W3A9</accession>
<comment type="function">
    <text evidence="1">Catalyzes the transfer of the phosphoribosyl group of 5-phosphorylribose-1-pyrophosphate (PRPP) to anthranilate to yield N-(5'-phosphoribosyl)-anthranilate (PRA).</text>
</comment>
<comment type="catalytic activity">
    <reaction evidence="1">
        <text>N-(5-phospho-beta-D-ribosyl)anthranilate + diphosphate = 5-phospho-alpha-D-ribose 1-diphosphate + anthranilate</text>
        <dbReference type="Rhea" id="RHEA:11768"/>
        <dbReference type="ChEBI" id="CHEBI:16567"/>
        <dbReference type="ChEBI" id="CHEBI:18277"/>
        <dbReference type="ChEBI" id="CHEBI:33019"/>
        <dbReference type="ChEBI" id="CHEBI:58017"/>
        <dbReference type="EC" id="2.4.2.18"/>
    </reaction>
</comment>
<comment type="cofactor">
    <cofactor evidence="1">
        <name>Mg(2+)</name>
        <dbReference type="ChEBI" id="CHEBI:18420"/>
    </cofactor>
    <text evidence="1">Binds 2 magnesium ions per monomer.</text>
</comment>
<comment type="pathway">
    <text evidence="1">Amino-acid biosynthesis; L-tryptophan biosynthesis; L-tryptophan from chorismate: step 2/5.</text>
</comment>
<comment type="subunit">
    <text evidence="1">Homodimer.</text>
</comment>
<comment type="similarity">
    <text evidence="1">Belongs to the anthranilate phosphoribosyltransferase family.</text>
</comment>